<feature type="chain" id="PRO_0000104587" description="Large ribosomal subunit protein uL30">
    <location>
        <begin position="1"/>
        <end position="59"/>
    </location>
</feature>
<keyword id="KW-0687">Ribonucleoprotein</keyword>
<keyword id="KW-0689">Ribosomal protein</keyword>
<dbReference type="EMBL" id="AE013218">
    <property type="protein sequence ID" value="AAM68030.1"/>
    <property type="molecule type" value="Genomic_DNA"/>
</dbReference>
<dbReference type="RefSeq" id="WP_011053996.1">
    <property type="nucleotide sequence ID" value="NC_004061.1"/>
</dbReference>
<dbReference type="SMR" id="Q8K967"/>
<dbReference type="STRING" id="198804.BUsg_487"/>
<dbReference type="GeneID" id="93003962"/>
<dbReference type="KEGG" id="bas:BUsg_487"/>
<dbReference type="eggNOG" id="COG1841">
    <property type="taxonomic scope" value="Bacteria"/>
</dbReference>
<dbReference type="HOGENOM" id="CLU_131047_1_4_6"/>
<dbReference type="Proteomes" id="UP000000416">
    <property type="component" value="Chromosome"/>
</dbReference>
<dbReference type="GO" id="GO:0022625">
    <property type="term" value="C:cytosolic large ribosomal subunit"/>
    <property type="evidence" value="ECO:0007669"/>
    <property type="project" value="TreeGrafter"/>
</dbReference>
<dbReference type="GO" id="GO:0003735">
    <property type="term" value="F:structural constituent of ribosome"/>
    <property type="evidence" value="ECO:0007669"/>
    <property type="project" value="InterPro"/>
</dbReference>
<dbReference type="GO" id="GO:0006412">
    <property type="term" value="P:translation"/>
    <property type="evidence" value="ECO:0007669"/>
    <property type="project" value="UniProtKB-UniRule"/>
</dbReference>
<dbReference type="CDD" id="cd01658">
    <property type="entry name" value="Ribosomal_L30"/>
    <property type="match status" value="1"/>
</dbReference>
<dbReference type="FunFam" id="3.30.1390.20:FF:000001">
    <property type="entry name" value="50S ribosomal protein L30"/>
    <property type="match status" value="1"/>
</dbReference>
<dbReference type="Gene3D" id="3.30.1390.20">
    <property type="entry name" value="Ribosomal protein L30, ferredoxin-like fold domain"/>
    <property type="match status" value="1"/>
</dbReference>
<dbReference type="HAMAP" id="MF_01371_B">
    <property type="entry name" value="Ribosomal_uL30_B"/>
    <property type="match status" value="1"/>
</dbReference>
<dbReference type="InterPro" id="IPR036919">
    <property type="entry name" value="Ribo_uL30_ferredoxin-like_sf"/>
</dbReference>
<dbReference type="InterPro" id="IPR005996">
    <property type="entry name" value="Ribosomal_uL30_bac-type"/>
</dbReference>
<dbReference type="InterPro" id="IPR016082">
    <property type="entry name" value="Ribosomal_uL30_ferredoxin-like"/>
</dbReference>
<dbReference type="NCBIfam" id="TIGR01308">
    <property type="entry name" value="rpmD_bact"/>
    <property type="match status" value="1"/>
</dbReference>
<dbReference type="PANTHER" id="PTHR15892:SF2">
    <property type="entry name" value="LARGE RIBOSOMAL SUBUNIT PROTEIN UL30M"/>
    <property type="match status" value="1"/>
</dbReference>
<dbReference type="PANTHER" id="PTHR15892">
    <property type="entry name" value="MITOCHONDRIAL RIBOSOMAL PROTEIN L30"/>
    <property type="match status" value="1"/>
</dbReference>
<dbReference type="Pfam" id="PF00327">
    <property type="entry name" value="Ribosomal_L30"/>
    <property type="match status" value="1"/>
</dbReference>
<dbReference type="PIRSF" id="PIRSF002211">
    <property type="entry name" value="Ribosomal_L30_bac-type"/>
    <property type="match status" value="1"/>
</dbReference>
<dbReference type="SUPFAM" id="SSF55129">
    <property type="entry name" value="Ribosomal protein L30p/L7e"/>
    <property type="match status" value="1"/>
</dbReference>
<reference key="1">
    <citation type="journal article" date="2002" name="Science">
        <title>50 million years of genomic stasis in endosymbiotic bacteria.</title>
        <authorList>
            <person name="Tamas I."/>
            <person name="Klasson L."/>
            <person name="Canbaeck B."/>
            <person name="Naeslund A.K."/>
            <person name="Eriksson A.-S."/>
            <person name="Wernegreen J.J."/>
            <person name="Sandstroem J.P."/>
            <person name="Moran N.A."/>
            <person name="Andersson S.G.E."/>
        </authorList>
    </citation>
    <scope>NUCLEOTIDE SEQUENCE [LARGE SCALE GENOMIC DNA]</scope>
    <source>
        <strain>Sg</strain>
    </source>
</reference>
<accession>Q8K967</accession>
<organism>
    <name type="scientific">Buchnera aphidicola subsp. Schizaphis graminum (strain Sg)</name>
    <dbReference type="NCBI Taxonomy" id="198804"/>
    <lineage>
        <taxon>Bacteria</taxon>
        <taxon>Pseudomonadati</taxon>
        <taxon>Pseudomonadota</taxon>
        <taxon>Gammaproteobacteria</taxon>
        <taxon>Enterobacterales</taxon>
        <taxon>Erwiniaceae</taxon>
        <taxon>Buchnera</taxon>
    </lineage>
</organism>
<gene>
    <name evidence="1" type="primary">rpmD</name>
    <name type="ordered locus">BUsg_487</name>
</gene>
<protein>
    <recommendedName>
        <fullName evidence="1">Large ribosomal subunit protein uL30</fullName>
    </recommendedName>
    <alternativeName>
        <fullName evidence="2">50S ribosomal protein L30</fullName>
    </alternativeName>
</protein>
<sequence length="59" mass="6720">MKTIKITQIKSSIGRIPDHKKTLLGLGLRHIGHSVIRQDTPSIRGMIKKISYILKIQEE</sequence>
<evidence type="ECO:0000255" key="1">
    <source>
        <dbReference type="HAMAP-Rule" id="MF_01371"/>
    </source>
</evidence>
<evidence type="ECO:0000305" key="2"/>
<comment type="subunit">
    <text evidence="1">Part of the 50S ribosomal subunit.</text>
</comment>
<comment type="similarity">
    <text evidence="1">Belongs to the universal ribosomal protein uL30 family.</text>
</comment>
<proteinExistence type="inferred from homology"/>
<name>RL30_BUCAP</name>